<name>CTS41_CAEEL</name>
<feature type="signal peptide" evidence="2">
    <location>
        <begin position="1"/>
        <end position="19"/>
    </location>
</feature>
<feature type="chain" id="PRO_0000004340" description="Serine carboxypeptidase ctsa-4.1" evidence="6">
    <location>
        <begin position="20"/>
        <end position="470"/>
    </location>
</feature>
<feature type="active site" evidence="4">
    <location>
        <position position="169"/>
    </location>
</feature>
<feature type="active site" evidence="1">
    <location>
        <position position="380"/>
    </location>
</feature>
<feature type="active site" evidence="5">
    <location>
        <position position="441"/>
    </location>
</feature>
<feature type="glycosylation site" description="N-linked (GlcNAc...) asparagine" evidence="3">
    <location>
        <position position="132"/>
    </location>
</feature>
<feature type="glycosylation site" description="N-linked (GlcNAc...) asparagine" evidence="3">
    <location>
        <position position="316"/>
    </location>
</feature>
<feature type="glycosylation site" description="N-linked (GlcNAc...) asparagine" evidence="3">
    <location>
        <position position="396"/>
    </location>
</feature>
<feature type="splice variant" id="VSP_060208" description="In isoform b." evidence="6">
    <location>
        <begin position="1"/>
        <end position="267"/>
    </location>
</feature>
<protein>
    <recommendedName>
        <fullName evidence="6">Serine carboxypeptidase ctsa-4.1</fullName>
    </recommendedName>
    <alternativeName>
        <fullName evidence="4">Carboxypeptidase C</fullName>
        <ecNumber evidence="4">3.4.16.5</ecNumber>
    </alternativeName>
</protein>
<dbReference type="EC" id="3.4.16.5" evidence="4"/>
<dbReference type="EMBL" id="BX284602">
    <property type="protein sequence ID" value="CCD66392.1"/>
    <property type="molecule type" value="Genomic_DNA"/>
</dbReference>
<dbReference type="EMBL" id="BX284602">
    <property type="protein sequence ID" value="CCD66393.1"/>
    <property type="molecule type" value="Genomic_DNA"/>
</dbReference>
<dbReference type="PIR" id="T16606">
    <property type="entry name" value="T16606"/>
</dbReference>
<dbReference type="RefSeq" id="NP_001379755.1">
    <molecule id="Q09991-2"/>
    <property type="nucleotide sequence ID" value="NM_001393099.1"/>
</dbReference>
<dbReference type="RefSeq" id="NP_495284.1">
    <molecule id="Q09991-1"/>
    <property type="nucleotide sequence ID" value="NM_062883.8"/>
</dbReference>
<dbReference type="RefSeq" id="NP_871927.1">
    <property type="nucleotide sequence ID" value="NM_182127.1"/>
</dbReference>
<dbReference type="SMR" id="Q09991"/>
<dbReference type="FunCoup" id="Q09991">
    <property type="interactions" value="134"/>
</dbReference>
<dbReference type="STRING" id="6239.K10B2.2a.2"/>
<dbReference type="ESTHER" id="caeel-k10b2.2">
    <property type="family name" value="Carboxypeptidase_S10"/>
</dbReference>
<dbReference type="MEROPS" id="S10.A58"/>
<dbReference type="GlyCosmos" id="Q09991">
    <property type="glycosylation" value="3 sites, No reported glycans"/>
</dbReference>
<dbReference type="PaxDb" id="6239-K10B2.2a"/>
<dbReference type="PeptideAtlas" id="Q09991"/>
<dbReference type="EnsemblMetazoa" id="K10B2.2a.1">
    <molecule id="Q09991-1"/>
    <property type="protein sequence ID" value="K10B2.2a.1"/>
    <property type="gene ID" value="WBGene00019605"/>
</dbReference>
<dbReference type="EnsemblMetazoa" id="K10B2.2b.1">
    <molecule id="Q09991-2"/>
    <property type="protein sequence ID" value="K10B2.2b.1"/>
    <property type="gene ID" value="WBGene00019605"/>
</dbReference>
<dbReference type="GeneID" id="174057"/>
<dbReference type="KEGG" id="cel:CELE_K10B2.2"/>
<dbReference type="UCSC" id="K10B2.2a">
    <property type="organism name" value="c. elegans"/>
</dbReference>
<dbReference type="AGR" id="WB:WBGene00019605"/>
<dbReference type="CTD" id="174057"/>
<dbReference type="WormBase" id="K10B2.2a">
    <molecule id="Q09991-1"/>
    <property type="protein sequence ID" value="CE02009"/>
    <property type="gene ID" value="WBGene00019605"/>
    <property type="gene designation" value="ctsa-4.1"/>
</dbReference>
<dbReference type="WormBase" id="K10B2.2b">
    <molecule id="Q09991-2"/>
    <property type="protein sequence ID" value="CE33418"/>
    <property type="gene ID" value="WBGene00019605"/>
    <property type="gene designation" value="ctsa-4.1"/>
</dbReference>
<dbReference type="eggNOG" id="KOG1282">
    <property type="taxonomic scope" value="Eukaryota"/>
</dbReference>
<dbReference type="HOGENOM" id="CLU_008523_13_3_1"/>
<dbReference type="InParanoid" id="Q09991"/>
<dbReference type="OMA" id="AAPYVWK"/>
<dbReference type="OrthoDB" id="443318at2759"/>
<dbReference type="PhylomeDB" id="Q09991"/>
<dbReference type="Reactome" id="R-CEL-2132295">
    <property type="pathway name" value="MHC class II antigen presentation"/>
</dbReference>
<dbReference type="Reactome" id="R-CEL-6798695">
    <property type="pathway name" value="Neutrophil degranulation"/>
</dbReference>
<dbReference type="PRO" id="PR:Q09991"/>
<dbReference type="Proteomes" id="UP000001940">
    <property type="component" value="Chromosome II"/>
</dbReference>
<dbReference type="Bgee" id="WBGene00019605">
    <property type="expression patterns" value="Expressed in larva and 3 other cell types or tissues"/>
</dbReference>
<dbReference type="GO" id="GO:0004185">
    <property type="term" value="F:serine-type carboxypeptidase activity"/>
    <property type="evidence" value="ECO:0000318"/>
    <property type="project" value="GO_Central"/>
</dbReference>
<dbReference type="GO" id="GO:0006508">
    <property type="term" value="P:proteolysis"/>
    <property type="evidence" value="ECO:0007669"/>
    <property type="project" value="UniProtKB-KW"/>
</dbReference>
<dbReference type="FunFam" id="3.40.50.1820:FF:000335">
    <property type="entry name" value="Carboxypeptidase"/>
    <property type="match status" value="1"/>
</dbReference>
<dbReference type="Gene3D" id="3.40.50.1820">
    <property type="entry name" value="alpha/beta hydrolase"/>
    <property type="match status" value="1"/>
</dbReference>
<dbReference type="InterPro" id="IPR029058">
    <property type="entry name" value="AB_hydrolase_fold"/>
</dbReference>
<dbReference type="InterPro" id="IPR001563">
    <property type="entry name" value="Peptidase_S10"/>
</dbReference>
<dbReference type="InterPro" id="IPR033124">
    <property type="entry name" value="Ser_caboxypep_his_AS"/>
</dbReference>
<dbReference type="InterPro" id="IPR018202">
    <property type="entry name" value="Ser_caboxypep_ser_AS"/>
</dbReference>
<dbReference type="PANTHER" id="PTHR11802:SF113">
    <property type="entry name" value="SERINE CARBOXYPEPTIDASE CTSA-4.1"/>
    <property type="match status" value="1"/>
</dbReference>
<dbReference type="PANTHER" id="PTHR11802">
    <property type="entry name" value="SERINE PROTEASE FAMILY S10 SERINE CARBOXYPEPTIDASE"/>
    <property type="match status" value="1"/>
</dbReference>
<dbReference type="Pfam" id="PF00450">
    <property type="entry name" value="Peptidase_S10"/>
    <property type="match status" value="1"/>
</dbReference>
<dbReference type="PRINTS" id="PR00724">
    <property type="entry name" value="CRBOXYPTASEC"/>
</dbReference>
<dbReference type="SUPFAM" id="SSF53474">
    <property type="entry name" value="alpha/beta-Hydrolases"/>
    <property type="match status" value="1"/>
</dbReference>
<dbReference type="PROSITE" id="PS00560">
    <property type="entry name" value="CARBOXYPEPT_SER_HIS"/>
    <property type="match status" value="1"/>
</dbReference>
<dbReference type="PROSITE" id="PS00131">
    <property type="entry name" value="CARBOXYPEPT_SER_SER"/>
    <property type="match status" value="1"/>
</dbReference>
<evidence type="ECO:0000250" key="1">
    <source>
        <dbReference type="UniProtKB" id="P52719"/>
    </source>
</evidence>
<evidence type="ECO:0000255" key="2"/>
<evidence type="ECO:0000255" key="3">
    <source>
        <dbReference type="PROSITE-ProRule" id="PRU00498"/>
    </source>
</evidence>
<evidence type="ECO:0000255" key="4">
    <source>
        <dbReference type="PROSITE-ProRule" id="PRU10074"/>
    </source>
</evidence>
<evidence type="ECO:0000255" key="5">
    <source>
        <dbReference type="PROSITE-ProRule" id="PRU10075"/>
    </source>
</evidence>
<evidence type="ECO:0000305" key="6"/>
<evidence type="ECO:0000312" key="7">
    <source>
        <dbReference type="WormBase" id="K10B2.2a"/>
    </source>
</evidence>
<evidence type="ECO:0000312" key="8">
    <source>
        <dbReference type="WormBase" id="K10B2.2b"/>
    </source>
</evidence>
<accession>Q09991</accession>
<accession>Q86NG2</accession>
<sequence length="470" mass="53158">MKLLSILFIFVSSYSFCLAAPATDKVNDLPGLTFTPDFFHYSGYLRAWTDKYLHYWLTESSRAPTQDPLVLWLNGGPGCSSLDGLIEELGPFHVKDFGNSIYYNEYAWNKFANVLFLESPAGVGYSYSTNFNLTVSDDEVSLHNYMALLDFLSKFPEYKGRDFWITGESYAGVYIPTLAVRILNDKKNFPNFKGVAIGNGALNFPNNYNTMVPFYYYHALVRDDLYNDIARNCCNNNIGTCDIYSKFFDPNCRDKVINALDGTNELNMYNLYDVCYYNPTTNLKKAFIERQMRIAVGLPARKHNAATTVPLCAQTNNTHVYLNRADVRKSLHIPSSLPAWEECSDQVGKNYVVTHFNVIPEFQTMIAAGIKILVYNGDVDTACNSIMNQQFLTSLNLTVLGEQEKVNEAWHYSGQTGTAVAGFQTKFAGNVDFLTVRGSGHFVPEDKPKESQQMIFNFINNKDYSTPIQL</sequence>
<organism>
    <name type="scientific">Caenorhabditis elegans</name>
    <dbReference type="NCBI Taxonomy" id="6239"/>
    <lineage>
        <taxon>Eukaryota</taxon>
        <taxon>Metazoa</taxon>
        <taxon>Ecdysozoa</taxon>
        <taxon>Nematoda</taxon>
        <taxon>Chromadorea</taxon>
        <taxon>Rhabditida</taxon>
        <taxon>Rhabditina</taxon>
        <taxon>Rhabditomorpha</taxon>
        <taxon>Rhabditoidea</taxon>
        <taxon>Rhabditidae</taxon>
        <taxon>Peloderinae</taxon>
        <taxon>Caenorhabditis</taxon>
    </lineage>
</organism>
<keyword id="KW-0025">Alternative splicing</keyword>
<keyword id="KW-0121">Carboxypeptidase</keyword>
<keyword id="KW-0325">Glycoprotein</keyword>
<keyword id="KW-0378">Hydrolase</keyword>
<keyword id="KW-0645">Protease</keyword>
<keyword id="KW-1185">Reference proteome</keyword>
<keyword id="KW-0732">Signal</keyword>
<reference key="1">
    <citation type="journal article" date="1998" name="Science">
        <title>Genome sequence of the nematode C. elegans: a platform for investigating biology.</title>
        <authorList>
            <consortium name="The C. elegans sequencing consortium"/>
        </authorList>
    </citation>
    <scope>NUCLEOTIDE SEQUENCE [LARGE SCALE GENOMIC DNA]</scope>
    <source>
        <strain>Bristol N2</strain>
    </source>
</reference>
<comment type="catalytic activity">
    <reaction evidence="4">
        <text>Release of a C-terminal amino acid with broad specificity.</text>
        <dbReference type="EC" id="3.4.16.5"/>
    </reaction>
</comment>
<comment type="alternative products">
    <event type="alternative splicing"/>
    <isoform>
        <id>Q09991-1</id>
        <name evidence="7">a</name>
        <sequence type="displayed"/>
    </isoform>
    <isoform>
        <id>Q09991-2</id>
        <name evidence="8">b</name>
        <sequence type="described" ref="VSP_060208"/>
    </isoform>
</comment>
<comment type="similarity">
    <text evidence="6">Belongs to the peptidase S10 family.</text>
</comment>
<proteinExistence type="inferred from homology"/>
<gene>
    <name evidence="7" type="primary">ctsa-4.1</name>
    <name evidence="7" type="synonym">ctsa-1</name>
    <name evidence="7" type="synonym">drd-7</name>
    <name evidence="7" type="ORF">K10B2.2</name>
</gene>